<accession>Q5C9L7</accession>
<protein>
    <recommendedName>
        <fullName evidence="4">(RS)-norcoclaurine 6-O-methyltransferase</fullName>
        <ecNumber evidence="3">2.1.1.128</ecNumber>
    </recommendedName>
</protein>
<comment type="function">
    <text evidence="3">Involved in the biosynthesis of coclaurine, a precursor of benzylisoquinoline alkaloids (PubMed:27232113). Catalyzes the transfer of the S-methyl group of S-adenosyl-L-methionine (AdoMet) to the 6-hydroxyl group of norcoclaurine to form coclaurine (PubMed:27232113).</text>
</comment>
<comment type="catalytic activity">
    <reaction evidence="3">
        <text>(S)-norcoclaurine + S-adenosyl-L-methionine = (S)-coclaurine + S-adenosyl-L-homocysteine + H(+)</text>
        <dbReference type="Rhea" id="RHEA:31907"/>
        <dbReference type="ChEBI" id="CHEBI:15378"/>
        <dbReference type="ChEBI" id="CHEBI:57581"/>
        <dbReference type="ChEBI" id="CHEBI:57856"/>
        <dbReference type="ChEBI" id="CHEBI:58253"/>
        <dbReference type="ChEBI" id="CHEBI:59789"/>
        <dbReference type="EC" id="2.1.1.128"/>
    </reaction>
</comment>
<comment type="catalytic activity">
    <reaction evidence="3">
        <text>norcoclaurine + S-adenosyl-L-methionine = coclaurine + S-adenosyl-L-homocysteine + H(+)</text>
        <dbReference type="Rhea" id="RHEA:19941"/>
        <dbReference type="ChEBI" id="CHEBI:15378"/>
        <dbReference type="ChEBI" id="CHEBI:57856"/>
        <dbReference type="ChEBI" id="CHEBI:58481"/>
        <dbReference type="ChEBI" id="CHEBI:58482"/>
        <dbReference type="ChEBI" id="CHEBI:59789"/>
        <dbReference type="EC" id="2.1.1.128"/>
    </reaction>
</comment>
<comment type="activity regulation">
    <text evidence="3">Inhibited by sanguinarine.</text>
</comment>
<comment type="biophysicochemical properties">
    <kinetics>
        <KM evidence="3">15 uM for norcoclaurine</KM>
    </kinetics>
</comment>
<comment type="subunit">
    <text evidence="3">Homodimer.</text>
</comment>
<comment type="tissue specificity">
    <text evidence="2">Expressed in leaf primordia of rhizomes and root endodermis.</text>
</comment>
<comment type="similarity">
    <text evidence="1 5">Belongs to the class I-like SAM-binding methyltransferase superfamily. Cation-independent O-methyltransferase family. COMT subfamily.</text>
</comment>
<organism>
    <name type="scientific">Thalictrum flavum subsp. glaucum</name>
    <name type="common">Yellow meadow rue</name>
    <dbReference type="NCBI Taxonomy" id="150095"/>
    <lineage>
        <taxon>Eukaryota</taxon>
        <taxon>Viridiplantae</taxon>
        <taxon>Streptophyta</taxon>
        <taxon>Embryophyta</taxon>
        <taxon>Tracheophyta</taxon>
        <taxon>Spermatophyta</taxon>
        <taxon>Magnoliopsida</taxon>
        <taxon>Ranunculales</taxon>
        <taxon>Ranunculaceae</taxon>
        <taxon>Thalictroideae</taxon>
        <taxon>Thalictrum</taxon>
    </lineage>
</organism>
<reference key="1">
    <citation type="journal article" date="2005" name="Plant Cell">
        <title>Cell type-specific localization of transcripts encoding nine consecutive enzymes involved in protoberberine alkaloid biosynthesis.</title>
        <authorList>
            <person name="Samanani N."/>
            <person name="Park S.U."/>
            <person name="Facchini P.J."/>
        </authorList>
    </citation>
    <scope>NUCLEOTIDE SEQUENCE [MRNA]</scope>
    <scope>TISSUE SPECIFICITY</scope>
</reference>
<reference key="2">
    <citation type="journal article" date="2016" name="Plant J.">
        <title>Crystal structure of norcoclaurine-6-O-methyltransferase, a key rate-limiting step in the synthesis of benzylisoquinoline alkaloids.</title>
        <authorList>
            <person name="Robin A.Y."/>
            <person name="Giustini C."/>
            <person name="Graindorge M."/>
            <person name="Matringe M."/>
            <person name="Dumas R."/>
        </authorList>
    </citation>
    <scope>X-RAY CRYSTALLOGRAPHY (1.60 ANGSTROMS) OF 3-350 IN COMPLEX WITH SUBSTRATE ANALOG AND S-ADENOSYL-L-HOMOCYSTEINE</scope>
    <scope>FUNCTION</scope>
    <scope>CATALYTIC ACTIVITY</scope>
    <scope>BIOPHYSICOCHEMICAL PROPERTIES</scope>
    <scope>ACTIVITY REGULATION</scope>
    <scope>HOMODIMERIZATION</scope>
</reference>
<feature type="chain" id="PRO_0000446976" description="(RS)-norcoclaurine 6-O-methyltransferase">
    <location>
        <begin position="1"/>
        <end position="350"/>
    </location>
</feature>
<feature type="active site" description="Proton acceptor" evidence="1">
    <location>
        <position position="256"/>
    </location>
</feature>
<feature type="binding site" evidence="3 6 7 8">
    <location>
        <position position="166"/>
    </location>
    <ligand>
        <name>S-adenosyl-L-methionine</name>
        <dbReference type="ChEBI" id="CHEBI:59789"/>
    </ligand>
</feature>
<feature type="binding site" evidence="3 7">
    <location>
        <position position="169"/>
    </location>
    <ligand>
        <name>substrate</name>
    </ligand>
</feature>
<feature type="binding site" evidence="3 6 7 8">
    <location>
        <position position="170"/>
    </location>
    <ligand>
        <name>S-adenosyl-L-methionine</name>
        <dbReference type="ChEBI" id="CHEBI:59789"/>
    </ligand>
</feature>
<feature type="binding site" evidence="3 6 7 8">
    <location>
        <position position="195"/>
    </location>
    <ligand>
        <name>S-adenosyl-L-methionine</name>
        <dbReference type="ChEBI" id="CHEBI:59789"/>
    </ligand>
</feature>
<feature type="binding site" evidence="1 3 6 7 8">
    <location>
        <position position="218"/>
    </location>
    <ligand>
        <name>S-adenosyl-L-methionine</name>
        <dbReference type="ChEBI" id="CHEBI:59789"/>
    </ligand>
</feature>
<feature type="binding site" evidence="3 6 7 8">
    <location>
        <begin position="238"/>
        <end position="239"/>
    </location>
    <ligand>
        <name>S-adenosyl-L-methionine</name>
        <dbReference type="ChEBI" id="CHEBI:59789"/>
    </ligand>
</feature>
<feature type="binding site" evidence="3 6 7 8">
    <location>
        <position position="252"/>
    </location>
    <ligand>
        <name>S-adenosyl-L-methionine</name>
        <dbReference type="ChEBI" id="CHEBI:59789"/>
    </ligand>
</feature>
<feature type="binding site" evidence="3 7">
    <location>
        <begin position="253"/>
        <end position="257"/>
    </location>
    <ligand>
        <name>substrate</name>
    </ligand>
</feature>
<feature type="binding site" evidence="3 7">
    <location>
        <position position="306"/>
    </location>
    <ligand>
        <name>substrate</name>
    </ligand>
</feature>
<feature type="helix" evidence="9">
    <location>
        <begin position="9"/>
        <end position="19"/>
    </location>
</feature>
<feature type="helix" evidence="9">
    <location>
        <begin position="21"/>
        <end position="34"/>
    </location>
</feature>
<feature type="helix" evidence="9">
    <location>
        <begin position="36"/>
        <end position="43"/>
    </location>
</feature>
<feature type="helix" evidence="9">
    <location>
        <begin position="49"/>
        <end position="54"/>
    </location>
</feature>
<feature type="strand" evidence="9">
    <location>
        <begin position="56"/>
        <end position="59"/>
    </location>
</feature>
<feature type="helix" evidence="9">
    <location>
        <begin position="63"/>
        <end position="75"/>
    </location>
</feature>
<feature type="strand" evidence="9">
    <location>
        <begin position="78"/>
        <end position="84"/>
    </location>
</feature>
<feature type="strand" evidence="9">
    <location>
        <begin position="87"/>
        <end position="92"/>
    </location>
</feature>
<feature type="helix" evidence="9">
    <location>
        <begin position="94"/>
        <end position="99"/>
    </location>
</feature>
<feature type="strand" evidence="9">
    <location>
        <begin position="100"/>
        <end position="103"/>
    </location>
</feature>
<feature type="helix" evidence="9">
    <location>
        <begin position="108"/>
        <end position="114"/>
    </location>
</feature>
<feature type="helix" evidence="9">
    <location>
        <begin position="117"/>
        <end position="120"/>
    </location>
</feature>
<feature type="helix" evidence="9">
    <location>
        <begin position="121"/>
        <end position="125"/>
    </location>
</feature>
<feature type="helix" evidence="9">
    <location>
        <begin position="126"/>
        <end position="130"/>
    </location>
</feature>
<feature type="helix" evidence="9">
    <location>
        <begin position="139"/>
        <end position="144"/>
    </location>
</feature>
<feature type="helix" evidence="9">
    <location>
        <begin position="148"/>
        <end position="153"/>
    </location>
</feature>
<feature type="helix" evidence="9">
    <location>
        <begin position="156"/>
        <end position="171"/>
    </location>
</feature>
<feature type="helix" evidence="9">
    <location>
        <begin position="174"/>
        <end position="180"/>
    </location>
</feature>
<feature type="helix" evidence="9">
    <location>
        <begin position="182"/>
        <end position="185"/>
    </location>
</feature>
<feature type="strand" evidence="9">
    <location>
        <begin position="189"/>
        <end position="194"/>
    </location>
</feature>
<feature type="helix" evidence="9">
    <location>
        <begin position="200"/>
        <end position="208"/>
    </location>
</feature>
<feature type="strand" evidence="9">
    <location>
        <begin position="212"/>
        <end position="218"/>
    </location>
</feature>
<feature type="helix" evidence="9">
    <location>
        <begin position="220"/>
        <end position="223"/>
    </location>
</feature>
<feature type="strand" evidence="9">
    <location>
        <begin position="230"/>
        <end position="236"/>
    </location>
</feature>
<feature type="turn" evidence="9">
    <location>
        <begin position="239"/>
        <end position="241"/>
    </location>
</feature>
<feature type="strand" evidence="9">
    <location>
        <begin position="247"/>
        <end position="253"/>
    </location>
</feature>
<feature type="helix" evidence="9">
    <location>
        <begin position="255"/>
        <end position="257"/>
    </location>
</feature>
<feature type="helix" evidence="9">
    <location>
        <begin position="260"/>
        <end position="271"/>
    </location>
</feature>
<feature type="turn" evidence="9">
    <location>
        <begin position="276"/>
        <end position="278"/>
    </location>
</feature>
<feature type="strand" evidence="9">
    <location>
        <begin position="280"/>
        <end position="285"/>
    </location>
</feature>
<feature type="strand" evidence="9">
    <location>
        <begin position="290"/>
        <end position="292"/>
    </location>
</feature>
<feature type="helix" evidence="9">
    <location>
        <begin position="297"/>
        <end position="310"/>
    </location>
</feature>
<feature type="helix" evidence="9">
    <location>
        <begin position="318"/>
        <end position="327"/>
    </location>
</feature>
<feature type="strand" evidence="9">
    <location>
        <begin position="331"/>
        <end position="336"/>
    </location>
</feature>
<feature type="strand" evidence="9">
    <location>
        <begin position="339"/>
        <end position="348"/>
    </location>
</feature>
<sequence>MEMINKENLSSQAKLWNFIYGFADSLVLKSAVQLDLANIIHNHGSPMTLSELSLHLPSQPVNQDALYRVLRYLVHMKLFTKSSIDGELRYGLAPPAKFLVKGWDKCMLGAILTITDKDFMAPWHYLKEGILNDGSTSTAFEKALGTNIWDYMAEHPEKNQLFNEGMANDTRLIMSALVKECSSMFDGITTIVDVGGGTGTAVRNIAKAFPHIKCTVYDLPHVIADSPGYTEINSIQGDMFKYIPNADAIMMKCILHDWDDKECIEILKRCKDAVPRDGGKVIIIDIILDVKSEHPYTKMRLTLDLDMMLNTGGKERTEEEWKKLIHDAGYKGYKITHISAVQSVIEAYPY</sequence>
<evidence type="ECO:0000255" key="1">
    <source>
        <dbReference type="PROSITE-ProRule" id="PRU01020"/>
    </source>
</evidence>
<evidence type="ECO:0000269" key="2">
    <source>
    </source>
</evidence>
<evidence type="ECO:0000269" key="3">
    <source>
    </source>
</evidence>
<evidence type="ECO:0000303" key="4">
    <source>
    </source>
</evidence>
<evidence type="ECO:0000305" key="5"/>
<evidence type="ECO:0007744" key="6">
    <source>
        <dbReference type="PDB" id="5ICC"/>
    </source>
</evidence>
<evidence type="ECO:0007744" key="7">
    <source>
        <dbReference type="PDB" id="5ICE"/>
    </source>
</evidence>
<evidence type="ECO:0007744" key="8">
    <source>
        <dbReference type="PDB" id="5ICF"/>
    </source>
</evidence>
<evidence type="ECO:0007829" key="9">
    <source>
        <dbReference type="PDB" id="5ICE"/>
    </source>
</evidence>
<proteinExistence type="evidence at protein level"/>
<dbReference type="EC" id="2.1.1.128" evidence="3"/>
<dbReference type="EMBL" id="AY610507">
    <property type="protein sequence ID" value="AAU20765.1"/>
    <property type="molecule type" value="mRNA"/>
</dbReference>
<dbReference type="PDB" id="5ICC">
    <property type="method" value="X-ray"/>
    <property type="resolution" value="1.90 A"/>
    <property type="chains" value="A=3-350"/>
</dbReference>
<dbReference type="PDB" id="5ICE">
    <property type="method" value="X-ray"/>
    <property type="resolution" value="1.60 A"/>
    <property type="chains" value="A=3-350"/>
</dbReference>
<dbReference type="PDB" id="5ICF">
    <property type="method" value="X-ray"/>
    <property type="resolution" value="1.80 A"/>
    <property type="chains" value="A=3-350"/>
</dbReference>
<dbReference type="PDB" id="5ICG">
    <property type="method" value="X-ray"/>
    <property type="resolution" value="2.60 A"/>
    <property type="chains" value="A=8-350"/>
</dbReference>
<dbReference type="PDBsum" id="5ICC"/>
<dbReference type="PDBsum" id="5ICE"/>
<dbReference type="PDBsum" id="5ICF"/>
<dbReference type="PDBsum" id="5ICG"/>
<dbReference type="SMR" id="Q5C9L7"/>
<dbReference type="GO" id="GO:0030786">
    <property type="term" value="F:(RS)-norcoclaurine 6-O-methyltransferase activity"/>
    <property type="evidence" value="ECO:0007669"/>
    <property type="project" value="UniProtKB-EC"/>
</dbReference>
<dbReference type="GO" id="GO:0008171">
    <property type="term" value="F:O-methyltransferase activity"/>
    <property type="evidence" value="ECO:0007669"/>
    <property type="project" value="InterPro"/>
</dbReference>
<dbReference type="GO" id="GO:0046983">
    <property type="term" value="F:protein dimerization activity"/>
    <property type="evidence" value="ECO:0007669"/>
    <property type="project" value="InterPro"/>
</dbReference>
<dbReference type="GO" id="GO:0009820">
    <property type="term" value="P:alkaloid metabolic process"/>
    <property type="evidence" value="ECO:0007669"/>
    <property type="project" value="UniProtKB-KW"/>
</dbReference>
<dbReference type="GO" id="GO:0032259">
    <property type="term" value="P:methylation"/>
    <property type="evidence" value="ECO:0007669"/>
    <property type="project" value="UniProtKB-KW"/>
</dbReference>
<dbReference type="FunFam" id="3.40.50.150:FF:000057">
    <property type="entry name" value="O-methyltransferase ZRP4"/>
    <property type="match status" value="1"/>
</dbReference>
<dbReference type="Gene3D" id="3.40.50.150">
    <property type="entry name" value="Vaccinia Virus protein VP39"/>
    <property type="match status" value="1"/>
</dbReference>
<dbReference type="Gene3D" id="1.10.10.10">
    <property type="entry name" value="Winged helix-like DNA-binding domain superfamily/Winged helix DNA-binding domain"/>
    <property type="match status" value="1"/>
</dbReference>
<dbReference type="InterPro" id="IPR016461">
    <property type="entry name" value="COMT-like"/>
</dbReference>
<dbReference type="InterPro" id="IPR001077">
    <property type="entry name" value="O_MeTrfase_dom"/>
</dbReference>
<dbReference type="InterPro" id="IPR012967">
    <property type="entry name" value="Plant_O-MeTrfase_dimerisation"/>
</dbReference>
<dbReference type="InterPro" id="IPR029063">
    <property type="entry name" value="SAM-dependent_MTases_sf"/>
</dbReference>
<dbReference type="InterPro" id="IPR036388">
    <property type="entry name" value="WH-like_DNA-bd_sf"/>
</dbReference>
<dbReference type="InterPro" id="IPR036390">
    <property type="entry name" value="WH_DNA-bd_sf"/>
</dbReference>
<dbReference type="PANTHER" id="PTHR11746">
    <property type="entry name" value="O-METHYLTRANSFERASE"/>
    <property type="match status" value="1"/>
</dbReference>
<dbReference type="Pfam" id="PF08100">
    <property type="entry name" value="Dimerisation"/>
    <property type="match status" value="1"/>
</dbReference>
<dbReference type="Pfam" id="PF00891">
    <property type="entry name" value="Methyltransf_2"/>
    <property type="match status" value="1"/>
</dbReference>
<dbReference type="PIRSF" id="PIRSF005739">
    <property type="entry name" value="O-mtase"/>
    <property type="match status" value="1"/>
</dbReference>
<dbReference type="SUPFAM" id="SSF53335">
    <property type="entry name" value="S-adenosyl-L-methionine-dependent methyltransferases"/>
    <property type="match status" value="1"/>
</dbReference>
<dbReference type="SUPFAM" id="SSF46785">
    <property type="entry name" value="Winged helix' DNA-binding domain"/>
    <property type="match status" value="1"/>
</dbReference>
<dbReference type="PROSITE" id="PS51683">
    <property type="entry name" value="SAM_OMT_II"/>
    <property type="match status" value="1"/>
</dbReference>
<name>6OMT_THLFG</name>
<keyword id="KW-0002">3D-structure</keyword>
<keyword id="KW-0017">Alkaloid metabolism</keyword>
<keyword id="KW-0489">Methyltransferase</keyword>
<keyword id="KW-0949">S-adenosyl-L-methionine</keyword>
<keyword id="KW-0808">Transferase</keyword>